<proteinExistence type="inferred from homology"/>
<sequence length="968" mass="109636">MPFTLGQRWISDTENELGLGTVVAQDARMVTLLFSTSGENRLYARTDAPITRVMFNPGDTVTSHEGWQLLIDTIEEKEGLLTYIGTRLDNGETGCTLREVLLDSKLTFSKPQDRLFAGQIDRMDRFALRYRARKFYSEQFRAPWNGLRGIRASLIPHQLHIASEVGQRHAPRVLLADEVGLGKTIEAGMIIHQQMLTGRAERVLIVVPESLLHQWLVEMLRRFNLHFSLFDDERYSQSLLDSDNPFETEQLVLCSLDFVRRNKERLTHLTEAEWDILVVDEAHHLAWSETAPSREYQVIERLAHHIPGVLLLTATPEQLGMQSHFARLRLLDPNRFHDYQAFADEQQRYRLVADTVGLLLNNELLDAAAMTLLAEMLGGQNADALLARVNEQNAADDDARRRLTAMLMDSHGTSRVMFRNTRQGVKGFPARRLHACALPLPAQYQTAFKVAGIMGGKQRLDESARHMLYPEQIFQQFEGQNATWWNFDPRVQWLVDFLLDLRQEKVLVICAHAGTALQLEQVLREREGIRAAVFHEGLSLVDRDRAAAYFASAEDGAQVLLCSEIGSEGRNFQFASQMVMFDLPFNPDLLEQRIGRLDRIGQNRDIQIHVPYLEQSAQAVLLRWYHEGLDAFEHTCPTGRALYDETYQTLQGYLAEPGALTGLTAFIHDCRARHDALKAQMEQGRDRLLELHSNGGEPARVLAQTLAEQDNDSQLVNFALNLFDIIGISQEDRSDNLLVLKPSDHMLVPDFPDVSEEGCTITFNRDQALAREETQFISWEHPIIRNGLDLVLSSESGNSALSLLKNKALPVGTLLLELIYVVESQAPRNLQLNRFLPATPLRLLLDKNGTNLAPQVEFEQFNRQLNAVKRHTASKLVSAVQPEVHGMLTHGEHLVAEQAQALIDEARAQADLLLSAELSRLKALRAVNPAIRDNELEAVAENRRQVLRHLDEASWRLDAIRLIVVTHQ</sequence>
<reference key="1">
    <citation type="journal article" date="2006" name="Genome Res.">
        <title>Massive genome erosion and functional adaptations provide insights into the symbiotic lifestyle of Sodalis glossinidius in the tsetse host.</title>
        <authorList>
            <person name="Toh H."/>
            <person name="Weiss B.L."/>
            <person name="Perkin S.A.H."/>
            <person name="Yamashita A."/>
            <person name="Oshima K."/>
            <person name="Hattori M."/>
            <person name="Aksoy S."/>
        </authorList>
    </citation>
    <scope>NUCLEOTIDE SEQUENCE [LARGE SCALE GENOMIC DNA]</scope>
    <source>
        <strain>morsitans</strain>
    </source>
</reference>
<feature type="chain" id="PRO_1000088396" description="RNA polymerase-associated protein RapA">
    <location>
        <begin position="1"/>
        <end position="968"/>
    </location>
</feature>
<feature type="domain" description="Helicase ATP-binding" evidence="1">
    <location>
        <begin position="164"/>
        <end position="334"/>
    </location>
</feature>
<feature type="domain" description="Helicase C-terminal" evidence="1">
    <location>
        <begin position="493"/>
        <end position="644"/>
    </location>
</feature>
<feature type="short sequence motif" description="DEAH box">
    <location>
        <begin position="280"/>
        <end position="283"/>
    </location>
</feature>
<feature type="binding site" evidence="1">
    <location>
        <begin position="177"/>
        <end position="184"/>
    </location>
    <ligand>
        <name>ATP</name>
        <dbReference type="ChEBI" id="CHEBI:30616"/>
    </ligand>
</feature>
<comment type="function">
    <text evidence="1">Transcription regulator that activates transcription by stimulating RNA polymerase (RNAP) recycling in case of stress conditions such as supercoiled DNA or high salt concentrations. Probably acts by releasing the RNAP, when it is trapped or immobilized on tightly supercoiled DNA. Does not activate transcription on linear DNA. Probably not involved in DNA repair.</text>
</comment>
<comment type="subunit">
    <text evidence="1">Interacts with the RNAP. Has a higher affinity for the core RNAP than for the holoenzyme. Its ATPase activity is stimulated by binding to RNAP.</text>
</comment>
<comment type="similarity">
    <text evidence="1">Belongs to the SNF2/RAD54 helicase family. RapA subfamily.</text>
</comment>
<organism>
    <name type="scientific">Sodalis glossinidius (strain morsitans)</name>
    <dbReference type="NCBI Taxonomy" id="343509"/>
    <lineage>
        <taxon>Bacteria</taxon>
        <taxon>Pseudomonadati</taxon>
        <taxon>Pseudomonadota</taxon>
        <taxon>Gammaproteobacteria</taxon>
        <taxon>Enterobacterales</taxon>
        <taxon>Bruguierivoracaceae</taxon>
        <taxon>Sodalis</taxon>
    </lineage>
</organism>
<evidence type="ECO:0000255" key="1">
    <source>
        <dbReference type="HAMAP-Rule" id="MF_01821"/>
    </source>
</evidence>
<dbReference type="EC" id="3.6.4.-" evidence="1"/>
<dbReference type="EMBL" id="AP008232">
    <property type="protein sequence ID" value="BAE73705.1"/>
    <property type="molecule type" value="Genomic_DNA"/>
</dbReference>
<dbReference type="RefSeq" id="WP_011410293.1">
    <property type="nucleotide sequence ID" value="NC_007712.1"/>
</dbReference>
<dbReference type="SMR" id="Q2NVX0"/>
<dbReference type="STRING" id="343509.SG0430"/>
<dbReference type="KEGG" id="sgl:SG0430"/>
<dbReference type="eggNOG" id="COG0553">
    <property type="taxonomic scope" value="Bacteria"/>
</dbReference>
<dbReference type="HOGENOM" id="CLU_011520_0_0_6"/>
<dbReference type="OrthoDB" id="9814088at2"/>
<dbReference type="BioCyc" id="SGLO343509:SGP1_RS03905-MONOMER"/>
<dbReference type="Proteomes" id="UP000001932">
    <property type="component" value="Chromosome"/>
</dbReference>
<dbReference type="GO" id="GO:0005524">
    <property type="term" value="F:ATP binding"/>
    <property type="evidence" value="ECO:0007669"/>
    <property type="project" value="UniProtKB-UniRule"/>
</dbReference>
<dbReference type="GO" id="GO:0003677">
    <property type="term" value="F:DNA binding"/>
    <property type="evidence" value="ECO:0007669"/>
    <property type="project" value="UniProtKB-KW"/>
</dbReference>
<dbReference type="GO" id="GO:0004386">
    <property type="term" value="F:helicase activity"/>
    <property type="evidence" value="ECO:0007669"/>
    <property type="project" value="UniProtKB-UniRule"/>
</dbReference>
<dbReference type="GO" id="GO:0016817">
    <property type="term" value="F:hydrolase activity, acting on acid anhydrides"/>
    <property type="evidence" value="ECO:0007669"/>
    <property type="project" value="InterPro"/>
</dbReference>
<dbReference type="GO" id="GO:0006355">
    <property type="term" value="P:regulation of DNA-templated transcription"/>
    <property type="evidence" value="ECO:0007669"/>
    <property type="project" value="UniProtKB-UniRule"/>
</dbReference>
<dbReference type="CDD" id="cd18011">
    <property type="entry name" value="DEXDc_RapA"/>
    <property type="match status" value="1"/>
</dbReference>
<dbReference type="CDD" id="cd18793">
    <property type="entry name" value="SF2_C_SNF"/>
    <property type="match status" value="1"/>
</dbReference>
<dbReference type="Gene3D" id="2.30.30.140">
    <property type="match status" value="1"/>
</dbReference>
<dbReference type="Gene3D" id="2.30.30.930">
    <property type="match status" value="1"/>
</dbReference>
<dbReference type="Gene3D" id="3.30.360.80">
    <property type="match status" value="1"/>
</dbReference>
<dbReference type="Gene3D" id="6.10.140.1500">
    <property type="match status" value="1"/>
</dbReference>
<dbReference type="Gene3D" id="6.10.140.2230">
    <property type="match status" value="1"/>
</dbReference>
<dbReference type="Gene3D" id="3.40.50.300">
    <property type="entry name" value="P-loop containing nucleotide triphosphate hydrolases"/>
    <property type="match status" value="1"/>
</dbReference>
<dbReference type="Gene3D" id="3.40.50.10810">
    <property type="entry name" value="Tandem AAA-ATPase domain"/>
    <property type="match status" value="1"/>
</dbReference>
<dbReference type="HAMAP" id="MF_01821">
    <property type="entry name" value="Helicase_RapA"/>
    <property type="match status" value="1"/>
</dbReference>
<dbReference type="InterPro" id="IPR014001">
    <property type="entry name" value="Helicase_ATP-bd"/>
</dbReference>
<dbReference type="InterPro" id="IPR001650">
    <property type="entry name" value="Helicase_C-like"/>
</dbReference>
<dbReference type="InterPro" id="IPR023949">
    <property type="entry name" value="Helicase_RapA"/>
</dbReference>
<dbReference type="InterPro" id="IPR027417">
    <property type="entry name" value="P-loop_NTPase"/>
</dbReference>
<dbReference type="InterPro" id="IPR022737">
    <property type="entry name" value="RapA_C"/>
</dbReference>
<dbReference type="InterPro" id="IPR038718">
    <property type="entry name" value="SNF2-like_sf"/>
</dbReference>
<dbReference type="InterPro" id="IPR049730">
    <property type="entry name" value="SNF2/RAD54-like_C"/>
</dbReference>
<dbReference type="InterPro" id="IPR000330">
    <property type="entry name" value="SNF2_N"/>
</dbReference>
<dbReference type="InterPro" id="IPR040765">
    <property type="entry name" value="Tudor_1_RapA"/>
</dbReference>
<dbReference type="InterPro" id="IPR040766">
    <property type="entry name" value="Tudor_2_RapA"/>
</dbReference>
<dbReference type="NCBIfam" id="NF003426">
    <property type="entry name" value="PRK04914.1"/>
    <property type="match status" value="1"/>
</dbReference>
<dbReference type="PANTHER" id="PTHR45766">
    <property type="entry name" value="DNA ANNEALING HELICASE AND ENDONUCLEASE ZRANB3 FAMILY MEMBER"/>
    <property type="match status" value="1"/>
</dbReference>
<dbReference type="PANTHER" id="PTHR45766:SF6">
    <property type="entry name" value="SWI_SNF-RELATED MATRIX-ASSOCIATED ACTIN-DEPENDENT REGULATOR OF CHROMATIN SUBFAMILY A-LIKE PROTEIN 1"/>
    <property type="match status" value="1"/>
</dbReference>
<dbReference type="Pfam" id="PF00271">
    <property type="entry name" value="Helicase_C"/>
    <property type="match status" value="1"/>
</dbReference>
<dbReference type="Pfam" id="PF12137">
    <property type="entry name" value="RapA_C"/>
    <property type="match status" value="1"/>
</dbReference>
<dbReference type="Pfam" id="PF00176">
    <property type="entry name" value="SNF2-rel_dom"/>
    <property type="match status" value="1"/>
</dbReference>
<dbReference type="Pfam" id="PF18339">
    <property type="entry name" value="Tudor_1_RapA"/>
    <property type="match status" value="1"/>
</dbReference>
<dbReference type="Pfam" id="PF18337">
    <property type="entry name" value="Tudor_RapA"/>
    <property type="match status" value="1"/>
</dbReference>
<dbReference type="SMART" id="SM00487">
    <property type="entry name" value="DEXDc"/>
    <property type="match status" value="1"/>
</dbReference>
<dbReference type="SMART" id="SM00490">
    <property type="entry name" value="HELICc"/>
    <property type="match status" value="1"/>
</dbReference>
<dbReference type="SUPFAM" id="SSF52540">
    <property type="entry name" value="P-loop containing nucleoside triphosphate hydrolases"/>
    <property type="match status" value="2"/>
</dbReference>
<dbReference type="PROSITE" id="PS51192">
    <property type="entry name" value="HELICASE_ATP_BIND_1"/>
    <property type="match status" value="1"/>
</dbReference>
<dbReference type="PROSITE" id="PS51194">
    <property type="entry name" value="HELICASE_CTER"/>
    <property type="match status" value="1"/>
</dbReference>
<keyword id="KW-0010">Activator</keyword>
<keyword id="KW-0067">ATP-binding</keyword>
<keyword id="KW-0238">DNA-binding</keyword>
<keyword id="KW-0347">Helicase</keyword>
<keyword id="KW-0378">Hydrolase</keyword>
<keyword id="KW-0547">Nucleotide-binding</keyword>
<keyword id="KW-0804">Transcription</keyword>
<keyword id="KW-0805">Transcription regulation</keyword>
<protein>
    <recommendedName>
        <fullName evidence="1">RNA polymerase-associated protein RapA</fullName>
        <ecNumber evidence="1">3.6.4.-</ecNumber>
    </recommendedName>
    <alternativeName>
        <fullName evidence="1">ATP-dependent helicase HepA</fullName>
    </alternativeName>
</protein>
<name>RAPA_SODGM</name>
<gene>
    <name evidence="1" type="primary">rapA</name>
    <name type="ordered locus">SG0430</name>
</gene>
<accession>Q2NVX0</accession>